<organism>
    <name type="scientific">Rickettsia rickettsii</name>
    <dbReference type="NCBI Taxonomy" id="783"/>
    <lineage>
        <taxon>Bacteria</taxon>
        <taxon>Pseudomonadati</taxon>
        <taxon>Pseudomonadota</taxon>
        <taxon>Alphaproteobacteria</taxon>
        <taxon>Rickettsiales</taxon>
        <taxon>Rickettsiaceae</taxon>
        <taxon>Rickettsieae</taxon>
        <taxon>Rickettsia</taxon>
        <taxon>spotted fever group</taxon>
    </lineage>
</organism>
<evidence type="ECO:0000250" key="1"/>
<evidence type="ECO:0000256" key="2">
    <source>
        <dbReference type="SAM" id="MobiDB-lite"/>
    </source>
</evidence>
<evidence type="ECO:0000269" key="3">
    <source>
    </source>
</evidence>
<gene>
    <name type="primary">rickA</name>
    <name type="ORF">ORFB4</name>
</gene>
<protein>
    <recommendedName>
        <fullName>Arp2/3 complex-activating protein rickA</fullName>
    </recommendedName>
    <alternativeName>
        <fullName>Actin polymerization protein rickA</fullName>
    </alternativeName>
</protein>
<feature type="chain" id="PRO_0000259653" description="Arp2/3 complex-activating protein rickA">
    <location>
        <begin position="1"/>
        <end position="494"/>
    </location>
</feature>
<feature type="domain" description="WH2">
    <location>
        <begin position="383"/>
        <end position="400"/>
    </location>
</feature>
<feature type="region of interest" description="Disordered" evidence="2">
    <location>
        <begin position="312"/>
        <end position="494"/>
    </location>
</feature>
<feature type="region of interest" description="Central and acidic domains">
    <location>
        <begin position="421"/>
        <end position="454"/>
    </location>
</feature>
<feature type="compositionally biased region" description="Pro residues" evidence="2">
    <location>
        <begin position="317"/>
        <end position="357"/>
    </location>
</feature>
<feature type="compositionally biased region" description="Low complexity" evidence="2">
    <location>
        <begin position="440"/>
        <end position="456"/>
    </location>
</feature>
<feature type="compositionally biased region" description="Polar residues" evidence="2">
    <location>
        <begin position="477"/>
        <end position="494"/>
    </location>
</feature>
<dbReference type="EMBL" id="AJ293314">
    <property type="protein sequence ID" value="CAC33668.1"/>
    <property type="molecule type" value="Genomic_DNA"/>
</dbReference>
<dbReference type="SMR" id="Q9AKJ0"/>
<dbReference type="GO" id="GO:0009986">
    <property type="term" value="C:cell surface"/>
    <property type="evidence" value="ECO:0007669"/>
    <property type="project" value="UniProtKB-SubCell"/>
</dbReference>
<dbReference type="GO" id="GO:0003779">
    <property type="term" value="F:actin binding"/>
    <property type="evidence" value="ECO:0007669"/>
    <property type="project" value="UniProtKB-KW"/>
</dbReference>
<dbReference type="Gene3D" id="6.10.280.150">
    <property type="match status" value="1"/>
</dbReference>
<dbReference type="InterPro" id="IPR051661">
    <property type="entry name" value="Actin_filament_regulator"/>
</dbReference>
<dbReference type="PANTHER" id="PTHR47102">
    <property type="entry name" value="PROTEIN BNI1"/>
    <property type="match status" value="1"/>
</dbReference>
<dbReference type="PANTHER" id="PTHR47102:SF2">
    <property type="entry name" value="PROTEIN BNI1"/>
    <property type="match status" value="1"/>
</dbReference>
<keyword id="KW-0009">Actin-binding</keyword>
<accession>Q9AKJ0</accession>
<reference key="1">
    <citation type="journal article" date="2001" name="Mol. Biol. Evol.">
        <title>Pseudogenes, junk DNA, and the dynamics of Rickettsia genomes.</title>
        <authorList>
            <person name="Andersson J.O."/>
            <person name="Andersson S.G.E."/>
        </authorList>
    </citation>
    <scope>NUCLEOTIDE SEQUENCE [GENOMIC DNA]</scope>
    <source>
        <strain>84-21C</strain>
    </source>
</reference>
<reference key="2">
    <citation type="journal article" date="2004" name="Cell. Microbiol.">
        <title>A Rickettsia WASP-like protein activates the Arp2/3 complex and mediates actin-based motility.</title>
        <authorList>
            <person name="Jeng R.L."/>
            <person name="Goley E.D."/>
            <person name="D'Alessio J.A."/>
            <person name="Chaga O.Y."/>
            <person name="Svitkina T.M."/>
            <person name="Borisy G.G."/>
            <person name="Heinzen R.A."/>
            <person name="Welch M.D."/>
        </authorList>
    </citation>
    <scope>FUNCTION</scope>
    <source>
        <strain>HLP</strain>
        <strain>Norgaard</strain>
    </source>
</reference>
<sequence>MVKEIDINKLLAQENNALNAILSHVNELCKQNKQLQGLIEIQNETKELEKEHNRSLPWFKRFVKTVSNVKYILIKSEEQLTNEAIKYNNKILKDIDNKIYNIAEKSAPLKQALQEEIEKSFKDLTKKDLSKDQRARLSEVFFSYKSKPERFSALHMTNPLQFINAEALEKQFNSLNATKQNIQNLISENSNIKELKEIQKQVAEIRAEVPHTFFEKLNNIWQNVKNVFVNNSEQVLAKNKESNTRTIRKIDEQLYKTQHKFEELIENKERNIKDIIAKLPDNEELQKIVSNLTNHMASKKEPILANVSLAKPLENNIPPPPPPPPPLPDNNIPPPPPPPPPLPDNNIPPPPPPPPMAPVKTLSKAVEATTVKKLENQPRPSIDTSDLMREIAGPKKLKKVEFDPNTGKPVAHSHSKPAQNVNKPSGLESIFARRVAIEMSDSSSSESDSGNWSDVSVNRNKSKMLKTKGERDAKMTTHAQKINNRNSQKPSFVR</sequence>
<proteinExistence type="inferred from homology"/>
<name>RICKA_RICRI</name>
<comment type="function">
    <text evidence="3">Recruits and activates the Arp2/3 complex, which in turn leads to actin polymerization, promoting Rickettsia motility during infection.</text>
</comment>
<comment type="subcellular location">
    <subcellularLocation>
        <location evidence="1">Cell surface</location>
    </subcellularLocation>
</comment>